<gene>
    <name type="primary">MT-ND5</name>
    <name type="synonym">MTND5</name>
    <name type="synonym">NADH5</name>
    <name type="synonym">ND5</name>
</gene>
<name>NU5M_CHIMO</name>
<sequence>MNYIFNLSYFMILLLLLYPLILPLCQKFFDKNLEKHTKWAIKLSFFISLIPLTLFIDQGIQTIIMNISWIHLPLFNINLSFKFDMYSIMFTSVALYVTWSILDFTSWYMYSDPNINRFFKYLLLFLITMILLVTANNMFQLFIGWEGVGIMSFLLIGWWYGRADANTAALQAVIYNRIGDIGLILSMIWLATNLNSWEMNQFMVLSKNLNLTIPLLGLILAATGKSAQFGLHPWLPSAMEGPTPVSALLHSSTMVVAGIFLLVRLNPLFQNNKEILTVCLCLGALTTLFTAICALTQNDIKKIIAFSTSSQLGLMMVTIGLNQPYLAFLHVCTHAFFKAMLFLCSGSIIHSLNNEQDIRKMGGLNNILPFTSSCMVLGSLALTGMPFLAGFFSKDAIIESLNTSYLNAWALILTLIATSFTAIYSLRLISFTMMGHPRFLPVSPINENHKLLKNPLKRLAYGSILAGFIITSNIPHNKSMIMTMPPLMKLMALLVTIVGLLLALELANLTTKQFKILPNMKMHNFSNMLGYYPPIIHRFLPKMSLKWGQTIATHTMDLNWYEKTGPKMTELNQKIIKIIHSPQKGVIKTYLTLSLLSIITLLVFFNLSLNHS</sequence>
<proteinExistence type="inferred from homology"/>
<geneLocation type="mitochondrion"/>
<organism>
    <name type="scientific">Chimaera monstrosa</name>
    <name type="common">Rabbit fish</name>
    <dbReference type="NCBI Taxonomy" id="7871"/>
    <lineage>
        <taxon>Eukaryota</taxon>
        <taxon>Metazoa</taxon>
        <taxon>Chordata</taxon>
        <taxon>Craniata</taxon>
        <taxon>Vertebrata</taxon>
        <taxon>Chondrichthyes</taxon>
        <taxon>Holocephali</taxon>
        <taxon>Chimaeriformes</taxon>
        <taxon>Chimaeridae</taxon>
        <taxon>Chimaera</taxon>
    </lineage>
</organism>
<accession>Q94RJ2</accession>
<protein>
    <recommendedName>
        <fullName>NADH-ubiquinone oxidoreductase chain 5</fullName>
        <ecNumber>7.1.1.2</ecNumber>
    </recommendedName>
    <alternativeName>
        <fullName>NADH dehydrogenase subunit 5</fullName>
    </alternativeName>
</protein>
<comment type="function">
    <text evidence="1">Core subunit of the mitochondrial membrane respiratory chain NADH dehydrogenase (Complex I) that is believed to belong to the minimal assembly required for catalysis. Complex I functions in the transfer of electrons from NADH to the respiratory chain. The immediate electron acceptor for the enzyme is believed to be ubiquinone (By similarity).</text>
</comment>
<comment type="catalytic activity">
    <reaction>
        <text>a ubiquinone + NADH + 5 H(+)(in) = a ubiquinol + NAD(+) + 4 H(+)(out)</text>
        <dbReference type="Rhea" id="RHEA:29091"/>
        <dbReference type="Rhea" id="RHEA-COMP:9565"/>
        <dbReference type="Rhea" id="RHEA-COMP:9566"/>
        <dbReference type="ChEBI" id="CHEBI:15378"/>
        <dbReference type="ChEBI" id="CHEBI:16389"/>
        <dbReference type="ChEBI" id="CHEBI:17976"/>
        <dbReference type="ChEBI" id="CHEBI:57540"/>
        <dbReference type="ChEBI" id="CHEBI:57945"/>
        <dbReference type="EC" id="7.1.1.2"/>
    </reaction>
</comment>
<comment type="subcellular location">
    <subcellularLocation>
        <location evidence="1">Mitochondrion inner membrane</location>
        <topology evidence="1">Multi-pass membrane protein</topology>
    </subcellularLocation>
</comment>
<comment type="similarity">
    <text evidence="3">Belongs to the complex I subunit 5 family.</text>
</comment>
<keyword id="KW-0249">Electron transport</keyword>
<keyword id="KW-0472">Membrane</keyword>
<keyword id="KW-0496">Mitochondrion</keyword>
<keyword id="KW-0999">Mitochondrion inner membrane</keyword>
<keyword id="KW-0520">NAD</keyword>
<keyword id="KW-0679">Respiratory chain</keyword>
<keyword id="KW-1278">Translocase</keyword>
<keyword id="KW-0812">Transmembrane</keyword>
<keyword id="KW-1133">Transmembrane helix</keyword>
<keyword id="KW-0813">Transport</keyword>
<keyword id="KW-0830">Ubiquinone</keyword>
<reference key="1">
    <citation type="journal article" date="2001" name="Zool. Scr.">
        <title>Molecular phylogenetics of gnathostomous (jawed) fishes: old bones, new cartilage.</title>
        <authorList>
            <person name="Arnason U."/>
            <person name="Gullberg A."/>
            <person name="Janke A."/>
        </authorList>
    </citation>
    <scope>NUCLEOTIDE SEQUENCE [GENOMIC DNA]</scope>
</reference>
<evidence type="ECO:0000250" key="1"/>
<evidence type="ECO:0000255" key="2"/>
<evidence type="ECO:0000305" key="3"/>
<feature type="chain" id="PRO_0000118079" description="NADH-ubiquinone oxidoreductase chain 5">
    <location>
        <begin position="1"/>
        <end position="612"/>
    </location>
</feature>
<feature type="transmembrane region" description="Helical" evidence="2">
    <location>
        <begin position="4"/>
        <end position="24"/>
    </location>
</feature>
<feature type="transmembrane region" description="Helical" evidence="2">
    <location>
        <begin position="45"/>
        <end position="65"/>
    </location>
</feature>
<feature type="transmembrane region" description="Helical" evidence="2">
    <location>
        <begin position="88"/>
        <end position="108"/>
    </location>
</feature>
<feature type="transmembrane region" description="Helical" evidence="2">
    <location>
        <begin position="118"/>
        <end position="138"/>
    </location>
</feature>
<feature type="transmembrane region" description="Helical" evidence="2">
    <location>
        <begin position="141"/>
        <end position="161"/>
    </location>
</feature>
<feature type="transmembrane region" description="Helical" evidence="2">
    <location>
        <begin position="172"/>
        <end position="192"/>
    </location>
</feature>
<feature type="transmembrane region" description="Helical" evidence="2">
    <location>
        <begin position="202"/>
        <end position="222"/>
    </location>
</feature>
<feature type="transmembrane region" description="Helical" evidence="2">
    <location>
        <begin position="243"/>
        <end position="263"/>
    </location>
</feature>
<feature type="transmembrane region" description="Helical" evidence="2">
    <location>
        <begin position="275"/>
        <end position="295"/>
    </location>
</feature>
<feature type="transmembrane region" description="Helical" evidence="2">
    <location>
        <begin position="327"/>
        <end position="349"/>
    </location>
</feature>
<feature type="transmembrane region" description="Helical" evidence="2">
    <location>
        <begin position="372"/>
        <end position="392"/>
    </location>
</feature>
<feature type="transmembrane region" description="Helical" evidence="2">
    <location>
        <begin position="406"/>
        <end position="426"/>
    </location>
</feature>
<feature type="transmembrane region" description="Helical" evidence="2">
    <location>
        <begin position="459"/>
        <end position="476"/>
    </location>
</feature>
<feature type="transmembrane region" description="Helical" evidence="2">
    <location>
        <begin position="490"/>
        <end position="510"/>
    </location>
</feature>
<feature type="transmembrane region" description="Helical" evidence="2">
    <location>
        <begin position="585"/>
        <end position="605"/>
    </location>
</feature>
<dbReference type="EC" id="7.1.1.2"/>
<dbReference type="EMBL" id="AJ310140">
    <property type="protein sequence ID" value="CAC84209.1"/>
    <property type="molecule type" value="Genomic_DNA"/>
</dbReference>
<dbReference type="RefSeq" id="NP_395450.1">
    <property type="nucleotide sequence ID" value="NC_003136.1"/>
</dbReference>
<dbReference type="SMR" id="Q94RJ2"/>
<dbReference type="GeneID" id="803910"/>
<dbReference type="CTD" id="4540"/>
<dbReference type="GO" id="GO:0005743">
    <property type="term" value="C:mitochondrial inner membrane"/>
    <property type="evidence" value="ECO:0007669"/>
    <property type="project" value="UniProtKB-SubCell"/>
</dbReference>
<dbReference type="GO" id="GO:0008137">
    <property type="term" value="F:NADH dehydrogenase (ubiquinone) activity"/>
    <property type="evidence" value="ECO:0007669"/>
    <property type="project" value="UniProtKB-EC"/>
</dbReference>
<dbReference type="GO" id="GO:0042773">
    <property type="term" value="P:ATP synthesis coupled electron transport"/>
    <property type="evidence" value="ECO:0007669"/>
    <property type="project" value="InterPro"/>
</dbReference>
<dbReference type="GO" id="GO:0015990">
    <property type="term" value="P:electron transport coupled proton transport"/>
    <property type="evidence" value="ECO:0007669"/>
    <property type="project" value="TreeGrafter"/>
</dbReference>
<dbReference type="InterPro" id="IPR010934">
    <property type="entry name" value="NADH_DH_su5_C"/>
</dbReference>
<dbReference type="InterPro" id="IPR018393">
    <property type="entry name" value="NADHpl_OxRdtase_5_subgr"/>
</dbReference>
<dbReference type="InterPro" id="IPR001750">
    <property type="entry name" value="ND/Mrp_TM"/>
</dbReference>
<dbReference type="InterPro" id="IPR003945">
    <property type="entry name" value="NU5C-like"/>
</dbReference>
<dbReference type="InterPro" id="IPR001516">
    <property type="entry name" value="Proton_antipo_N"/>
</dbReference>
<dbReference type="NCBIfam" id="TIGR01974">
    <property type="entry name" value="NDH_I_L"/>
    <property type="match status" value="1"/>
</dbReference>
<dbReference type="PANTHER" id="PTHR42829">
    <property type="entry name" value="NADH-UBIQUINONE OXIDOREDUCTASE CHAIN 5"/>
    <property type="match status" value="1"/>
</dbReference>
<dbReference type="PANTHER" id="PTHR42829:SF2">
    <property type="entry name" value="NADH-UBIQUINONE OXIDOREDUCTASE CHAIN 5"/>
    <property type="match status" value="1"/>
</dbReference>
<dbReference type="Pfam" id="PF06455">
    <property type="entry name" value="NADH5_C"/>
    <property type="match status" value="1"/>
</dbReference>
<dbReference type="Pfam" id="PF00361">
    <property type="entry name" value="Proton_antipo_M"/>
    <property type="match status" value="1"/>
</dbReference>
<dbReference type="Pfam" id="PF00662">
    <property type="entry name" value="Proton_antipo_N"/>
    <property type="match status" value="1"/>
</dbReference>
<dbReference type="PRINTS" id="PR01434">
    <property type="entry name" value="NADHDHGNASE5"/>
</dbReference>